<reference key="1">
    <citation type="journal article" date="2001" name="Nature">
        <title>Genome sequence of Yersinia pestis, the causative agent of plague.</title>
        <authorList>
            <person name="Parkhill J."/>
            <person name="Wren B.W."/>
            <person name="Thomson N.R."/>
            <person name="Titball R.W."/>
            <person name="Holden M.T.G."/>
            <person name="Prentice M.B."/>
            <person name="Sebaihia M."/>
            <person name="James K.D."/>
            <person name="Churcher C.M."/>
            <person name="Mungall K.L."/>
            <person name="Baker S."/>
            <person name="Basham D."/>
            <person name="Bentley S.D."/>
            <person name="Brooks K."/>
            <person name="Cerdeno-Tarraga A.-M."/>
            <person name="Chillingworth T."/>
            <person name="Cronin A."/>
            <person name="Davies R.M."/>
            <person name="Davis P."/>
            <person name="Dougan G."/>
            <person name="Feltwell T."/>
            <person name="Hamlin N."/>
            <person name="Holroyd S."/>
            <person name="Jagels K."/>
            <person name="Karlyshev A.V."/>
            <person name="Leather S."/>
            <person name="Moule S."/>
            <person name="Oyston P.C.F."/>
            <person name="Quail M.A."/>
            <person name="Rutherford K.M."/>
            <person name="Simmonds M."/>
            <person name="Skelton J."/>
            <person name="Stevens K."/>
            <person name="Whitehead S."/>
            <person name="Barrell B.G."/>
        </authorList>
    </citation>
    <scope>NUCLEOTIDE SEQUENCE [LARGE SCALE GENOMIC DNA]</scope>
    <source>
        <strain>CO-92 / Biovar Orientalis</strain>
    </source>
</reference>
<reference key="2">
    <citation type="journal article" date="2002" name="J. Bacteriol.">
        <title>Genome sequence of Yersinia pestis KIM.</title>
        <authorList>
            <person name="Deng W."/>
            <person name="Burland V."/>
            <person name="Plunkett G. III"/>
            <person name="Boutin A."/>
            <person name="Mayhew G.F."/>
            <person name="Liss P."/>
            <person name="Perna N.T."/>
            <person name="Rose D.J."/>
            <person name="Mau B."/>
            <person name="Zhou S."/>
            <person name="Schwartz D.C."/>
            <person name="Fetherston J.D."/>
            <person name="Lindler L.E."/>
            <person name="Brubaker R.R."/>
            <person name="Plano G.V."/>
            <person name="Straley S.C."/>
            <person name="McDonough K.A."/>
            <person name="Nilles M.L."/>
            <person name="Matson J.S."/>
            <person name="Blattner F.R."/>
            <person name="Perry R.D."/>
        </authorList>
    </citation>
    <scope>NUCLEOTIDE SEQUENCE [LARGE SCALE GENOMIC DNA]</scope>
    <source>
        <strain>KIM10+ / Biovar Mediaevalis</strain>
    </source>
</reference>
<reference key="3">
    <citation type="journal article" date="2004" name="DNA Res.">
        <title>Complete genome sequence of Yersinia pestis strain 91001, an isolate avirulent to humans.</title>
        <authorList>
            <person name="Song Y."/>
            <person name="Tong Z."/>
            <person name="Wang J."/>
            <person name="Wang L."/>
            <person name="Guo Z."/>
            <person name="Han Y."/>
            <person name="Zhang J."/>
            <person name="Pei D."/>
            <person name="Zhou D."/>
            <person name="Qin H."/>
            <person name="Pang X."/>
            <person name="Han Y."/>
            <person name="Zhai J."/>
            <person name="Li M."/>
            <person name="Cui B."/>
            <person name="Qi Z."/>
            <person name="Jin L."/>
            <person name="Dai R."/>
            <person name="Chen F."/>
            <person name="Li S."/>
            <person name="Ye C."/>
            <person name="Du Z."/>
            <person name="Lin W."/>
            <person name="Wang J."/>
            <person name="Yu J."/>
            <person name="Yang H."/>
            <person name="Wang J."/>
            <person name="Huang P."/>
            <person name="Yang R."/>
        </authorList>
    </citation>
    <scope>NUCLEOTIDE SEQUENCE [LARGE SCALE GENOMIC DNA]</scope>
    <source>
        <strain>91001 / Biovar Mediaevalis</strain>
    </source>
</reference>
<organism>
    <name type="scientific">Yersinia pestis</name>
    <dbReference type="NCBI Taxonomy" id="632"/>
    <lineage>
        <taxon>Bacteria</taxon>
        <taxon>Pseudomonadati</taxon>
        <taxon>Pseudomonadota</taxon>
        <taxon>Gammaproteobacteria</taxon>
        <taxon>Enterobacterales</taxon>
        <taxon>Yersiniaceae</taxon>
        <taxon>Yersinia</taxon>
    </lineage>
</organism>
<evidence type="ECO:0000255" key="1">
    <source>
        <dbReference type="HAMAP-Rule" id="MF_01601"/>
    </source>
</evidence>
<evidence type="ECO:0000305" key="2"/>
<keyword id="KW-0119">Carbohydrate metabolism</keyword>
<keyword id="KW-0413">Isomerase</keyword>
<keyword id="KW-0521">NADP</keyword>
<keyword id="KW-1185">Reference proteome</keyword>
<proteinExistence type="inferred from homology"/>
<accession>Q8ZJN4</accession>
<accession>Q0WKN4</accession>
<accession>Q74YA1</accession>
<accession>Q8D1S5</accession>
<sequence length="310" mass="34780">MIIVTGGAGFIGSNIVKALNNIGYKDILVVDNLKDGTKFVNLVDLDIADYMDKEDFVASIVAGDDMGDIDAIFHEGACSSTTEWDGKYMMDNNYQYSKDILHFCLDRSIPFLYASSAATYGGRTDNFIEDRQYEQPLNVYGYSKFLFDQYVREILPQADSQICGFRYFNVYGPREGHKGSMASVAFHLNNQINAGERPKLFAGSENFKRDFIYVGDVADVNLWFWQNGVSGIFNCGTGRAESFQAVADAVVDYHQSGPVEYIEFPEKLKGRYQAYTQADLTKLRAAGYGKPFKTVAEGVKEYLAWLNRSV</sequence>
<comment type="function">
    <text evidence="1">Catalyzes the interconversion between ADP-D-glycero-beta-D-manno-heptose and ADP-L-glycero-beta-D-manno-heptose via an epimerization at carbon 6 of the heptose.</text>
</comment>
<comment type="catalytic activity">
    <reaction evidence="1">
        <text>ADP-D-glycero-beta-D-manno-heptose = ADP-L-glycero-beta-D-manno-heptose</text>
        <dbReference type="Rhea" id="RHEA:17577"/>
        <dbReference type="ChEBI" id="CHEBI:59967"/>
        <dbReference type="ChEBI" id="CHEBI:61506"/>
        <dbReference type="EC" id="5.1.3.20"/>
    </reaction>
</comment>
<comment type="cofactor">
    <cofactor evidence="1">
        <name>NADP(+)</name>
        <dbReference type="ChEBI" id="CHEBI:58349"/>
    </cofactor>
    <text evidence="1">Binds 1 NADP(+) per subunit.</text>
</comment>
<comment type="pathway">
    <text evidence="1">Nucleotide-sugar biosynthesis; ADP-L-glycero-beta-D-manno-heptose biosynthesis; ADP-L-glycero-beta-D-manno-heptose from D-glycero-beta-D-manno-heptose 7-phosphate: step 4/4.</text>
</comment>
<comment type="pathway">
    <text>Bacterial outer membrane biogenesis; LPS core biosynthesis.</text>
</comment>
<comment type="subunit">
    <text evidence="1">Homopentamer.</text>
</comment>
<comment type="domain">
    <text evidence="1">Contains a large N-terminal NADP-binding domain, and a smaller C-terminal substrate-binding domain.</text>
</comment>
<comment type="similarity">
    <text evidence="1">Belongs to the NAD(P)-dependent epimerase/dehydratase family. HldD subfamily.</text>
</comment>
<comment type="sequence caution" evidence="2">
    <conflict type="erroneous initiation">
        <sequence resource="EMBL-CDS" id="AAM83676"/>
    </conflict>
</comment>
<comment type="sequence caution" evidence="2">
    <conflict type="erroneous initiation">
        <sequence resource="EMBL-CDS" id="AAS60340"/>
    </conflict>
</comment>
<protein>
    <recommendedName>
        <fullName evidence="1">ADP-L-glycero-D-manno-heptose-6-epimerase</fullName>
        <ecNumber evidence="1">5.1.3.20</ecNumber>
    </recommendedName>
    <alternativeName>
        <fullName evidence="1">ADP-L-glycero-beta-D-manno-heptose-6-epimerase</fullName>
        <shortName evidence="1">ADP-glyceromanno-heptose 6-epimerase</shortName>
        <shortName evidence="1">ADP-hep 6-epimerase</shortName>
        <shortName evidence="1">AGME</shortName>
    </alternativeName>
</protein>
<gene>
    <name evidence="1" type="primary">hldD</name>
    <name type="synonym">htrM</name>
    <name type="synonym">rfaD</name>
    <name type="ordered locus">YPO0058</name>
    <name type="ordered locus">y0083</name>
    <name type="ordered locus">YP_0059</name>
</gene>
<feature type="chain" id="PRO_0000205815" description="ADP-L-glycero-D-manno-heptose-6-epimerase">
    <location>
        <begin position="1"/>
        <end position="310"/>
    </location>
</feature>
<feature type="active site" description="Proton acceptor" evidence="1">
    <location>
        <position position="140"/>
    </location>
</feature>
<feature type="active site" description="Proton acceptor" evidence="1">
    <location>
        <position position="178"/>
    </location>
</feature>
<feature type="binding site" evidence="1">
    <location>
        <begin position="10"/>
        <end position="11"/>
    </location>
    <ligand>
        <name>NADP(+)</name>
        <dbReference type="ChEBI" id="CHEBI:58349"/>
    </ligand>
</feature>
<feature type="binding site" evidence="1">
    <location>
        <begin position="31"/>
        <end position="32"/>
    </location>
    <ligand>
        <name>NADP(+)</name>
        <dbReference type="ChEBI" id="CHEBI:58349"/>
    </ligand>
</feature>
<feature type="binding site" evidence="1">
    <location>
        <position position="38"/>
    </location>
    <ligand>
        <name>NADP(+)</name>
        <dbReference type="ChEBI" id="CHEBI:58349"/>
    </ligand>
</feature>
<feature type="binding site" evidence="1">
    <location>
        <position position="53"/>
    </location>
    <ligand>
        <name>NADP(+)</name>
        <dbReference type="ChEBI" id="CHEBI:58349"/>
    </ligand>
</feature>
<feature type="binding site" evidence="1">
    <location>
        <begin position="75"/>
        <end position="79"/>
    </location>
    <ligand>
        <name>NADP(+)</name>
        <dbReference type="ChEBI" id="CHEBI:58349"/>
    </ligand>
</feature>
<feature type="binding site" evidence="1">
    <location>
        <position position="92"/>
    </location>
    <ligand>
        <name>NADP(+)</name>
        <dbReference type="ChEBI" id="CHEBI:58349"/>
    </ligand>
</feature>
<feature type="binding site" evidence="1">
    <location>
        <position position="144"/>
    </location>
    <ligand>
        <name>NADP(+)</name>
        <dbReference type="ChEBI" id="CHEBI:58349"/>
    </ligand>
</feature>
<feature type="binding site" evidence="1">
    <location>
        <position position="169"/>
    </location>
    <ligand>
        <name>substrate</name>
    </ligand>
</feature>
<feature type="binding site" evidence="1">
    <location>
        <position position="170"/>
    </location>
    <ligand>
        <name>NADP(+)</name>
        <dbReference type="ChEBI" id="CHEBI:58349"/>
    </ligand>
</feature>
<feature type="binding site" evidence="1">
    <location>
        <position position="178"/>
    </location>
    <ligand>
        <name>NADP(+)</name>
        <dbReference type="ChEBI" id="CHEBI:58349"/>
    </ligand>
</feature>
<feature type="binding site" evidence="1">
    <location>
        <position position="180"/>
    </location>
    <ligand>
        <name>substrate</name>
    </ligand>
</feature>
<feature type="binding site" evidence="1">
    <location>
        <position position="187"/>
    </location>
    <ligand>
        <name>substrate</name>
    </ligand>
</feature>
<feature type="binding site" evidence="1">
    <location>
        <begin position="201"/>
        <end position="204"/>
    </location>
    <ligand>
        <name>substrate</name>
    </ligand>
</feature>
<feature type="binding site" evidence="1">
    <location>
        <position position="209"/>
    </location>
    <ligand>
        <name>substrate</name>
    </ligand>
</feature>
<feature type="binding site" evidence="1">
    <location>
        <position position="272"/>
    </location>
    <ligand>
        <name>substrate</name>
    </ligand>
</feature>
<dbReference type="EC" id="5.1.3.20" evidence="1"/>
<dbReference type="EMBL" id="AL590842">
    <property type="protein sequence ID" value="CAL18748.1"/>
    <property type="molecule type" value="Genomic_DNA"/>
</dbReference>
<dbReference type="EMBL" id="AE009952">
    <property type="protein sequence ID" value="AAM83676.1"/>
    <property type="status" value="ALT_INIT"/>
    <property type="molecule type" value="Genomic_DNA"/>
</dbReference>
<dbReference type="EMBL" id="AE017042">
    <property type="protein sequence ID" value="AAS60340.1"/>
    <property type="status" value="ALT_INIT"/>
    <property type="molecule type" value="Genomic_DNA"/>
</dbReference>
<dbReference type="PIR" id="AC0008">
    <property type="entry name" value="AC0008"/>
</dbReference>
<dbReference type="RefSeq" id="WP_002208983.1">
    <property type="nucleotide sequence ID" value="NZ_WUCM01000015.1"/>
</dbReference>
<dbReference type="RefSeq" id="YP_002345154.1">
    <property type="nucleotide sequence ID" value="NC_003143.1"/>
</dbReference>
<dbReference type="SMR" id="Q8ZJN4"/>
<dbReference type="IntAct" id="Q8ZJN4">
    <property type="interactions" value="1"/>
</dbReference>
<dbReference type="STRING" id="214092.YPO0058"/>
<dbReference type="PaxDb" id="214092-YPO0058"/>
<dbReference type="EnsemblBacteria" id="AAS60340">
    <property type="protein sequence ID" value="AAS60340"/>
    <property type="gene ID" value="YP_0059"/>
</dbReference>
<dbReference type="GeneID" id="57974532"/>
<dbReference type="KEGG" id="ype:YPO0058"/>
<dbReference type="KEGG" id="ypk:y0083"/>
<dbReference type="KEGG" id="ypm:YP_0059"/>
<dbReference type="PATRIC" id="fig|214092.21.peg.281"/>
<dbReference type="eggNOG" id="COG0451">
    <property type="taxonomic scope" value="Bacteria"/>
</dbReference>
<dbReference type="HOGENOM" id="CLU_007383_1_3_6"/>
<dbReference type="OMA" id="FSKLCMD"/>
<dbReference type="OrthoDB" id="9803010at2"/>
<dbReference type="UniPathway" id="UPA00356">
    <property type="reaction ID" value="UER00440"/>
</dbReference>
<dbReference type="UniPathway" id="UPA00958"/>
<dbReference type="Proteomes" id="UP000000815">
    <property type="component" value="Chromosome"/>
</dbReference>
<dbReference type="Proteomes" id="UP000001019">
    <property type="component" value="Chromosome"/>
</dbReference>
<dbReference type="Proteomes" id="UP000002490">
    <property type="component" value="Chromosome"/>
</dbReference>
<dbReference type="GO" id="GO:0008712">
    <property type="term" value="F:ADP-glyceromanno-heptose 6-epimerase activity"/>
    <property type="evidence" value="ECO:0007669"/>
    <property type="project" value="UniProtKB-UniRule"/>
</dbReference>
<dbReference type="GO" id="GO:0050661">
    <property type="term" value="F:NADP binding"/>
    <property type="evidence" value="ECO:0007669"/>
    <property type="project" value="InterPro"/>
</dbReference>
<dbReference type="GO" id="GO:0097171">
    <property type="term" value="P:ADP-L-glycero-beta-D-manno-heptose biosynthetic process"/>
    <property type="evidence" value="ECO:0007669"/>
    <property type="project" value="UniProtKB-UniPathway"/>
</dbReference>
<dbReference type="GO" id="GO:0009244">
    <property type="term" value="P:lipopolysaccharide core region biosynthetic process"/>
    <property type="evidence" value="ECO:0007669"/>
    <property type="project" value="UniProtKB-UniPathway"/>
</dbReference>
<dbReference type="CDD" id="cd05248">
    <property type="entry name" value="ADP_GME_SDR_e"/>
    <property type="match status" value="1"/>
</dbReference>
<dbReference type="Gene3D" id="3.40.50.720">
    <property type="entry name" value="NAD(P)-binding Rossmann-like Domain"/>
    <property type="match status" value="1"/>
</dbReference>
<dbReference type="Gene3D" id="3.90.25.10">
    <property type="entry name" value="UDP-galactose 4-epimerase, domain 1"/>
    <property type="match status" value="1"/>
</dbReference>
<dbReference type="HAMAP" id="MF_01601">
    <property type="entry name" value="Heptose_epimerase"/>
    <property type="match status" value="1"/>
</dbReference>
<dbReference type="InterPro" id="IPR001509">
    <property type="entry name" value="Epimerase_deHydtase"/>
</dbReference>
<dbReference type="InterPro" id="IPR011912">
    <property type="entry name" value="Heptose_epim"/>
</dbReference>
<dbReference type="InterPro" id="IPR036291">
    <property type="entry name" value="NAD(P)-bd_dom_sf"/>
</dbReference>
<dbReference type="NCBIfam" id="TIGR02197">
    <property type="entry name" value="heptose_epim"/>
    <property type="match status" value="1"/>
</dbReference>
<dbReference type="NCBIfam" id="NF008360">
    <property type="entry name" value="PRK11150.1"/>
    <property type="match status" value="1"/>
</dbReference>
<dbReference type="PANTHER" id="PTHR43103:SF3">
    <property type="entry name" value="ADP-L-GLYCERO-D-MANNO-HEPTOSE-6-EPIMERASE"/>
    <property type="match status" value="1"/>
</dbReference>
<dbReference type="PANTHER" id="PTHR43103">
    <property type="entry name" value="NUCLEOSIDE-DIPHOSPHATE-SUGAR EPIMERASE"/>
    <property type="match status" value="1"/>
</dbReference>
<dbReference type="Pfam" id="PF01370">
    <property type="entry name" value="Epimerase"/>
    <property type="match status" value="1"/>
</dbReference>
<dbReference type="SUPFAM" id="SSF51735">
    <property type="entry name" value="NAD(P)-binding Rossmann-fold domains"/>
    <property type="match status" value="1"/>
</dbReference>
<name>HLDD_YERPE</name>